<feature type="chain" id="PRO_0000387268" description="Probable inorganic carbon transporter subunit DabA">
    <location>
        <begin position="1"/>
        <end position="801"/>
    </location>
</feature>
<feature type="binding site" evidence="1">
    <location>
        <position position="330"/>
    </location>
    <ligand>
        <name>Zn(2+)</name>
        <dbReference type="ChEBI" id="CHEBI:29105"/>
    </ligand>
</feature>
<feature type="binding site" evidence="1">
    <location>
        <position position="332"/>
    </location>
    <ligand>
        <name>Zn(2+)</name>
        <dbReference type="ChEBI" id="CHEBI:29105"/>
    </ligand>
</feature>
<feature type="binding site" evidence="1">
    <location>
        <position position="489"/>
    </location>
    <ligand>
        <name>Zn(2+)</name>
        <dbReference type="ChEBI" id="CHEBI:29105"/>
    </ligand>
</feature>
<feature type="binding site" evidence="1">
    <location>
        <position position="504"/>
    </location>
    <ligand>
        <name>Zn(2+)</name>
        <dbReference type="ChEBI" id="CHEBI:29105"/>
    </ligand>
</feature>
<name>DABA_JANSC</name>
<organism>
    <name type="scientific">Jannaschia sp. (strain CCS1)</name>
    <dbReference type="NCBI Taxonomy" id="290400"/>
    <lineage>
        <taxon>Bacteria</taxon>
        <taxon>Pseudomonadati</taxon>
        <taxon>Pseudomonadota</taxon>
        <taxon>Alphaproteobacteria</taxon>
        <taxon>Rhodobacterales</taxon>
        <taxon>Roseobacteraceae</taxon>
        <taxon>Jannaschia</taxon>
    </lineage>
</organism>
<comment type="function">
    <text evidence="1">Part of an energy-coupled inorganic carbon pump.</text>
</comment>
<comment type="cofactor">
    <cofactor evidence="1">
        <name>Zn(2+)</name>
        <dbReference type="ChEBI" id="CHEBI:29105"/>
    </cofactor>
</comment>
<comment type="subunit">
    <text evidence="1">Forms a complex with DabB.</text>
</comment>
<comment type="subcellular location">
    <subcellularLocation>
        <location evidence="1">Cell inner membrane</location>
        <topology evidence="1">Peripheral membrane protein</topology>
    </subcellularLocation>
</comment>
<comment type="similarity">
    <text evidence="1">Belongs to the inorganic carbon transporter (TC 9.A.2) DabA family.</text>
</comment>
<keyword id="KW-0997">Cell inner membrane</keyword>
<keyword id="KW-1003">Cell membrane</keyword>
<keyword id="KW-0472">Membrane</keyword>
<keyword id="KW-0479">Metal-binding</keyword>
<keyword id="KW-1185">Reference proteome</keyword>
<keyword id="KW-0813">Transport</keyword>
<keyword id="KW-0862">Zinc</keyword>
<gene>
    <name evidence="1" type="primary">dabA</name>
    <name type="ordered locus">Jann_1258</name>
</gene>
<sequence>MTTVHDLSSDTMTTAADRAARAIPPVWPLASSVAVNPFLGQTEEHLAQVSARLGRIGNVPVTMPPAHYAALIEDGTITDDDIASASAASRIDNAPDLAEIKRSAAVPFDRPEPHSTIADLAARMSGIDWPGILADRFGHWASGFFDQGQALWAAPRRRGAYDAWRQTATHDLTPEITGLTGFAQFVSETPDTAQEARLRAAKRLGLDDDMLETYLHQLLFSLGGWAQVARYHLWQAELSQTTDETIADLLTIRLLWEEALFLQYEDRIGDRWEATKTAHAQPVTPQRGEIINAILQEAWEHAVQRDLASTIAAPSPERGEDRPTLQAAFCIDVRSEVFRRALEAVNPGIQTLGFAGFFGLTASHKSFASDVDELRLPVLLNAGVTSTSTGENVTAEQTARFKARAKRAWGRFKLAAVSSFAFVEATGPIYAGKLVRDALNIGSDPHDYGPAPVLDPPLPLDAQIDAAETILRAMSLTTDFAPLVVLAGHGANVVNNPFASGLHCGACGGYAGDVNARLLAALLNTPDVRAGLADRGIDVPSDTLFLGALHDTTTDAITLFAKDHPSAAHDAGIAQAETWFAQAGTVTRAERALRLPRADGDADVDLRSRDWAETRPEWALAGCKAFIAAPRHRTAGKSLAGRAFLHDYDWKKDSDFSVLELIMTAPVVVASWISLQYYGSTVAPDVFGSGNKLLHNVTGGIGVVEGNGGTLRAGLPWQSVHEGEGYAHDPLRLSVCIEAPREAMTDILRRHDGVRALFDNRWLHLFALDASGQMAWRYTGDLEWSEMARDARISDDLDAAG</sequence>
<dbReference type="EMBL" id="CP000264">
    <property type="protein sequence ID" value="ABD54175.1"/>
    <property type="molecule type" value="Genomic_DNA"/>
</dbReference>
<dbReference type="RefSeq" id="WP_011454382.1">
    <property type="nucleotide sequence ID" value="NC_007802.1"/>
</dbReference>
<dbReference type="STRING" id="290400.Jann_1258"/>
<dbReference type="KEGG" id="jan:Jann_1258"/>
<dbReference type="eggNOG" id="COG3002">
    <property type="taxonomic scope" value="Bacteria"/>
</dbReference>
<dbReference type="HOGENOM" id="CLU_009885_1_0_5"/>
<dbReference type="OrthoDB" id="9805101at2"/>
<dbReference type="Proteomes" id="UP000008326">
    <property type="component" value="Chromosome"/>
</dbReference>
<dbReference type="GO" id="GO:0005886">
    <property type="term" value="C:plasma membrane"/>
    <property type="evidence" value="ECO:0007669"/>
    <property type="project" value="UniProtKB-SubCell"/>
</dbReference>
<dbReference type="GO" id="GO:0008270">
    <property type="term" value="F:zinc ion binding"/>
    <property type="evidence" value="ECO:0007669"/>
    <property type="project" value="UniProtKB-UniRule"/>
</dbReference>
<dbReference type="HAMAP" id="MF_01871">
    <property type="entry name" value="DabA"/>
    <property type="match status" value="1"/>
</dbReference>
<dbReference type="InterPro" id="IPR018752">
    <property type="entry name" value="DabA"/>
</dbReference>
<dbReference type="PANTHER" id="PTHR38344:SF1">
    <property type="entry name" value="INORGANIC CARBON TRANSPORTER SUBUNIT DABA-RELATED"/>
    <property type="match status" value="1"/>
</dbReference>
<dbReference type="PANTHER" id="PTHR38344">
    <property type="entry name" value="UPF0753 PROTEIN AQ_863"/>
    <property type="match status" value="1"/>
</dbReference>
<dbReference type="Pfam" id="PF10070">
    <property type="entry name" value="DabA"/>
    <property type="match status" value="1"/>
</dbReference>
<protein>
    <recommendedName>
        <fullName evidence="1">Probable inorganic carbon transporter subunit DabA</fullName>
    </recommendedName>
</protein>
<accession>Q28SY7</accession>
<proteinExistence type="inferred from homology"/>
<reference key="1">
    <citation type="submission" date="2006-02" db="EMBL/GenBank/DDBJ databases">
        <title>Complete sequence of chromosome of Jannaschia sp. CCS1.</title>
        <authorList>
            <consortium name="US DOE Joint Genome Institute"/>
            <person name="Copeland A."/>
            <person name="Lucas S."/>
            <person name="Lapidus A."/>
            <person name="Barry K."/>
            <person name="Detter J.C."/>
            <person name="Glavina del Rio T."/>
            <person name="Hammon N."/>
            <person name="Israni S."/>
            <person name="Pitluck S."/>
            <person name="Brettin T."/>
            <person name="Bruce D."/>
            <person name="Han C."/>
            <person name="Tapia R."/>
            <person name="Gilna P."/>
            <person name="Chertkov O."/>
            <person name="Saunders E."/>
            <person name="Schmutz J."/>
            <person name="Larimer F."/>
            <person name="Land M."/>
            <person name="Kyrpides N."/>
            <person name="Lykidis A."/>
            <person name="Moran M.A."/>
            <person name="Belas R."/>
            <person name="Ye W."/>
            <person name="Buchan A."/>
            <person name="Gonzalez J.M."/>
            <person name="Schell M.A."/>
            <person name="Richardson P."/>
        </authorList>
    </citation>
    <scope>NUCLEOTIDE SEQUENCE [LARGE SCALE GENOMIC DNA]</scope>
    <source>
        <strain>CCS1</strain>
    </source>
</reference>
<evidence type="ECO:0000255" key="1">
    <source>
        <dbReference type="HAMAP-Rule" id="MF_01871"/>
    </source>
</evidence>